<proteinExistence type="inferred from homology"/>
<protein>
    <recommendedName>
        <fullName evidence="1">Small ribosomal subunit protein uS8</fullName>
    </recommendedName>
    <alternativeName>
        <fullName evidence="2">30S ribosomal protein S8</fullName>
    </alternativeName>
</protein>
<reference key="1">
    <citation type="submission" date="2007-10" db="EMBL/GenBank/DDBJ databases">
        <title>Complete sequence of Caldivirga maquilingensis IC-167.</title>
        <authorList>
            <consortium name="US DOE Joint Genome Institute"/>
            <person name="Copeland A."/>
            <person name="Lucas S."/>
            <person name="Lapidus A."/>
            <person name="Barry K."/>
            <person name="Glavina del Rio T."/>
            <person name="Dalin E."/>
            <person name="Tice H."/>
            <person name="Pitluck S."/>
            <person name="Saunders E."/>
            <person name="Brettin T."/>
            <person name="Bruce D."/>
            <person name="Detter J.C."/>
            <person name="Han C."/>
            <person name="Schmutz J."/>
            <person name="Larimer F."/>
            <person name="Land M."/>
            <person name="Hauser L."/>
            <person name="Kyrpides N."/>
            <person name="Ivanova N."/>
            <person name="Biddle J.F."/>
            <person name="Zhang Z."/>
            <person name="Fitz-Gibbon S.T."/>
            <person name="Lowe T.M."/>
            <person name="Saltikov C."/>
            <person name="House C.H."/>
            <person name="Richardson P."/>
        </authorList>
    </citation>
    <scope>NUCLEOTIDE SEQUENCE [LARGE SCALE GENOMIC DNA]</scope>
    <source>
        <strain>ATCC 700844 / DSM 13496 / JCM 10307 / IC-167</strain>
    </source>
</reference>
<keyword id="KW-1185">Reference proteome</keyword>
<keyword id="KW-0687">Ribonucleoprotein</keyword>
<keyword id="KW-0689">Ribosomal protein</keyword>
<keyword id="KW-0694">RNA-binding</keyword>
<keyword id="KW-0699">rRNA-binding</keyword>
<name>RS8_CALMQ</name>
<sequence>MVMLDVLSNALMSVKNAESRGDRQVIIWPSSKLIGNVLRVMQRYGYVGEFEYVYDGRGGKYVVQLLGRINDIGAIKPRFHVKVDELQKWEEKYLPARQVGILILTTSKGVVSHLEARENRVGGILVAYVY</sequence>
<comment type="function">
    <text evidence="1">One of the primary rRNA binding proteins, it binds directly to 16S rRNA central domain where it helps coordinate assembly of the platform of the 30S subunit.</text>
</comment>
<comment type="subunit">
    <text evidence="1">Part of the 30S ribosomal subunit.</text>
</comment>
<comment type="similarity">
    <text evidence="1">Belongs to the universal ribosomal protein uS8 family.</text>
</comment>
<dbReference type="EMBL" id="CP000852">
    <property type="protein sequence ID" value="ABW02572.1"/>
    <property type="molecule type" value="Genomic_DNA"/>
</dbReference>
<dbReference type="RefSeq" id="WP_012186791.1">
    <property type="nucleotide sequence ID" value="NC_009954.1"/>
</dbReference>
<dbReference type="SMR" id="A8MAJ5"/>
<dbReference type="STRING" id="397948.Cmaq_1749"/>
<dbReference type="GeneID" id="5709440"/>
<dbReference type="KEGG" id="cma:Cmaq_1749"/>
<dbReference type="eggNOG" id="arCOG04091">
    <property type="taxonomic scope" value="Archaea"/>
</dbReference>
<dbReference type="HOGENOM" id="CLU_098428_1_1_2"/>
<dbReference type="OrthoDB" id="5670at2157"/>
<dbReference type="Proteomes" id="UP000001137">
    <property type="component" value="Chromosome"/>
</dbReference>
<dbReference type="GO" id="GO:1990904">
    <property type="term" value="C:ribonucleoprotein complex"/>
    <property type="evidence" value="ECO:0007669"/>
    <property type="project" value="UniProtKB-KW"/>
</dbReference>
<dbReference type="GO" id="GO:0005840">
    <property type="term" value="C:ribosome"/>
    <property type="evidence" value="ECO:0007669"/>
    <property type="project" value="UniProtKB-KW"/>
</dbReference>
<dbReference type="GO" id="GO:0019843">
    <property type="term" value="F:rRNA binding"/>
    <property type="evidence" value="ECO:0007669"/>
    <property type="project" value="UniProtKB-UniRule"/>
</dbReference>
<dbReference type="GO" id="GO:0003735">
    <property type="term" value="F:structural constituent of ribosome"/>
    <property type="evidence" value="ECO:0007669"/>
    <property type="project" value="InterPro"/>
</dbReference>
<dbReference type="GO" id="GO:0006412">
    <property type="term" value="P:translation"/>
    <property type="evidence" value="ECO:0007669"/>
    <property type="project" value="UniProtKB-UniRule"/>
</dbReference>
<dbReference type="FunFam" id="3.30.1370.30:FF:000001">
    <property type="entry name" value="40S ribosomal protein S15a"/>
    <property type="match status" value="1"/>
</dbReference>
<dbReference type="Gene3D" id="3.30.1370.30">
    <property type="match status" value="1"/>
</dbReference>
<dbReference type="Gene3D" id="3.30.1490.10">
    <property type="match status" value="1"/>
</dbReference>
<dbReference type="HAMAP" id="MF_01302_A">
    <property type="entry name" value="Ribosomal_uS8_A"/>
    <property type="match status" value="1"/>
</dbReference>
<dbReference type="InterPro" id="IPR000630">
    <property type="entry name" value="Ribosomal_uS8"/>
</dbReference>
<dbReference type="InterPro" id="IPR047863">
    <property type="entry name" value="Ribosomal_uS8_CS"/>
</dbReference>
<dbReference type="InterPro" id="IPR035987">
    <property type="entry name" value="Ribosomal_uS8_sf"/>
</dbReference>
<dbReference type="NCBIfam" id="NF003115">
    <property type="entry name" value="PRK04034.1"/>
    <property type="match status" value="1"/>
</dbReference>
<dbReference type="PANTHER" id="PTHR11758">
    <property type="entry name" value="40S RIBOSOMAL PROTEIN S15A"/>
    <property type="match status" value="1"/>
</dbReference>
<dbReference type="Pfam" id="PF00410">
    <property type="entry name" value="Ribosomal_S8"/>
    <property type="match status" value="1"/>
</dbReference>
<dbReference type="SUPFAM" id="SSF56047">
    <property type="entry name" value="Ribosomal protein S8"/>
    <property type="match status" value="1"/>
</dbReference>
<dbReference type="PROSITE" id="PS00053">
    <property type="entry name" value="RIBOSOMAL_S8"/>
    <property type="match status" value="1"/>
</dbReference>
<organism>
    <name type="scientific">Caldivirga maquilingensis (strain ATCC 700844 / DSM 13496 / JCM 10307 / IC-167)</name>
    <dbReference type="NCBI Taxonomy" id="397948"/>
    <lineage>
        <taxon>Archaea</taxon>
        <taxon>Thermoproteota</taxon>
        <taxon>Thermoprotei</taxon>
        <taxon>Thermoproteales</taxon>
        <taxon>Thermoproteaceae</taxon>
        <taxon>Caldivirga</taxon>
    </lineage>
</organism>
<accession>A8MAJ5</accession>
<feature type="chain" id="PRO_1000085913" description="Small ribosomal subunit protein uS8">
    <location>
        <begin position="1"/>
        <end position="130"/>
    </location>
</feature>
<gene>
    <name evidence="1" type="primary">rps8</name>
    <name type="ordered locus">Cmaq_1749</name>
</gene>
<evidence type="ECO:0000255" key="1">
    <source>
        <dbReference type="HAMAP-Rule" id="MF_01302"/>
    </source>
</evidence>
<evidence type="ECO:0000305" key="2"/>